<gene>
    <name type="primary">XDH</name>
</gene>
<protein>
    <recommendedName>
        <fullName>Xanthine dehydrogenase/oxidase</fullName>
    </recommendedName>
    <domain>
        <recommendedName>
            <fullName>Xanthine dehydrogenase</fullName>
            <shortName>XD</shortName>
            <ecNumber evidence="2">1.17.1.4</ecNumber>
        </recommendedName>
    </domain>
    <domain>
        <recommendedName>
            <fullName>Xanthine oxidase</fullName>
            <shortName>XO</shortName>
            <ecNumber evidence="2">1.17.3.2</ecNumber>
        </recommendedName>
        <alternativeName>
            <fullName>Xanthine oxidoreductase</fullName>
            <shortName>XOR</shortName>
        </alternativeName>
    </domain>
</protein>
<keyword id="KW-0001">2Fe-2S</keyword>
<keyword id="KW-0963">Cytoplasm</keyword>
<keyword id="KW-1015">Disulfide bond</keyword>
<keyword id="KW-0274">FAD</keyword>
<keyword id="KW-0285">Flavoprotein</keyword>
<keyword id="KW-0408">Iron</keyword>
<keyword id="KW-0411">Iron-sulfur</keyword>
<keyword id="KW-0479">Metal-binding</keyword>
<keyword id="KW-0500">Molybdenum</keyword>
<keyword id="KW-0520">NAD</keyword>
<keyword id="KW-0560">Oxidoreductase</keyword>
<keyword id="KW-0576">Peroxisome</keyword>
<keyword id="KW-1185">Reference proteome</keyword>
<keyword id="KW-0964">Secreted</keyword>
<sequence length="1331" mass="146122">MTADELVFFVNGKKVVEKNADPETTLLAYLRRKLGLSGTKLGCGEGGCGACTVMLSKYDRFQNKIVHFSANACLAPICSLHHVAVTTVEGIGSTKSRLHPVQERIAKSHGSQCGFCTPGIVMSMYTLLRNQPEPTIEEIEDAFQGNLCRCTGYRPILQGFRTFARDGGCCGGSGNDLNCCMNQKTDHKITLSPSLFNPEEFTPLDPTQEPIFPPELLRLKDTPQKQLRFEGERVTWIQASTLQELLDLKAQDPEAKLVVGNTEIGIEMKFKNMLFPKMVCPAWIPEPVEHGPEGISFGASCPLSLVEKTLLDAVANLPAHQTEVFKGVLEQLRWFAGKQVKSVASIGGNIITASPISDLNPVFMASGAKLTIVSTGTRRTVRMDHTFFPAYRKTLLAPEEILLSIEIPYSREGEYFSAFKQASRREDDIAKVTSGMRVLFNPGTAQVKELALCYGGMHDRTVSALQTTRKQISNFWNEELLQNVCAGLAEELSLAPDAPGGMVEFRRTLTLSFFFKFYLTVLQKLGIQNSKDKCGKLDPTHASATLLFQKDPPANVQLFQEVPKGQCEEDMVGRPLPHLAAAMQASGEAVYCDDIPRYENELSLRLVTSTRAHAKIKSIDTSEAQKVPGFVCFISADDVPGSNITGIGNDEMVFAKDKVTCIGHIIGAVVTDTREHAQRAAQAVRITYEDLPAIITIEDAIAKDSFYEPELKIEKGNLTKGFSEADNIVSGELYIGGQEHFYLETHCTIAVPKGEAGEMELFVSTQNTTKTQSFVANMLGVPANRILVRVKRMGGGFGGKETRSTVVSTAVPLAAYKTGRPVRCMLDRDEDMLITGGRHPFLARYKVGFMKTGRVVALKVEHYSNAGNTLDLSQSIMERALFHMDNCYNIPNIRGTGRICKTNLPSNTAFRGFGGPQGMLIAEHWMSEVAVTCGLPAEEVRRKNMYKEGDLTHFNQKLEGFTLPRCWEECLASSQYHARKREADKFNEENCWKKRGLSIIPTKFGISFTVPFLNQAGALVHVYTDGSVLLTHGGTEMGQGLHTKMVQVASRALKIPTSKIYISETSTNTVPNTSPTAASVSTDINGQAVYEACQTILKRLEPFKKKNPSGSWEDWVTAAYLDAVSLSATGFYKTPNIGYSFETNSGNPFHYFSYGVACSEVEIDCLTGDHKNLRTDIVMDVGSSLNPAIDIGQVEGAFVQGLGLFTLEELHYSPEGSLHTRGPSTYKIPAFGSIPSEFRVSLLRDCPNKKAIYASKAVGEPPLFLAASIFFAIKDAICAARAGNPDCKTKKLFQLNSPATPEKIRNACVDQFTRLCVTGTAESCKPWSVRV</sequence>
<proteinExistence type="evidence at transcript level"/>
<organism>
    <name type="scientific">Felis catus</name>
    <name type="common">Cat</name>
    <name type="synonym">Felis silvestris catus</name>
    <dbReference type="NCBI Taxonomy" id="9685"/>
    <lineage>
        <taxon>Eukaryota</taxon>
        <taxon>Metazoa</taxon>
        <taxon>Chordata</taxon>
        <taxon>Craniata</taxon>
        <taxon>Vertebrata</taxon>
        <taxon>Euteleostomi</taxon>
        <taxon>Mammalia</taxon>
        <taxon>Eutheria</taxon>
        <taxon>Laurasiatheria</taxon>
        <taxon>Carnivora</taxon>
        <taxon>Feliformia</taxon>
        <taxon>Felidae</taxon>
        <taxon>Felinae</taxon>
        <taxon>Felis</taxon>
    </lineage>
</organism>
<evidence type="ECO:0000250" key="1"/>
<evidence type="ECO:0000250" key="2">
    <source>
        <dbReference type="UniProtKB" id="P22985"/>
    </source>
</evidence>
<evidence type="ECO:0000255" key="3">
    <source>
        <dbReference type="PROSITE-ProRule" id="PRU00465"/>
    </source>
</evidence>
<evidence type="ECO:0000255" key="4">
    <source>
        <dbReference type="PROSITE-ProRule" id="PRU00718"/>
    </source>
</evidence>
<evidence type="ECO:0000305" key="5"/>
<accession>Q9MYW6</accession>
<feature type="chain" id="PRO_0000246176" description="Xanthine dehydrogenase/oxidase">
    <location>
        <begin position="1"/>
        <end position="1331"/>
    </location>
</feature>
<feature type="domain" description="2Fe-2S ferredoxin-type" evidence="3">
    <location>
        <begin position="4"/>
        <end position="91"/>
    </location>
</feature>
<feature type="domain" description="FAD-binding PCMH-type" evidence="4">
    <location>
        <begin position="229"/>
        <end position="412"/>
    </location>
</feature>
<feature type="active site" description="Proton acceptor" evidence="1">
    <location>
        <position position="1260"/>
    </location>
</feature>
<feature type="binding site" evidence="2">
    <location>
        <position position="43"/>
    </location>
    <ligand>
        <name>[2Fe-2S] cluster</name>
        <dbReference type="ChEBI" id="CHEBI:190135"/>
        <label>1</label>
    </ligand>
</feature>
<feature type="binding site" evidence="2">
    <location>
        <position position="48"/>
    </location>
    <ligand>
        <name>[2Fe-2S] cluster</name>
        <dbReference type="ChEBI" id="CHEBI:190135"/>
        <label>1</label>
    </ligand>
</feature>
<feature type="binding site" evidence="2">
    <location>
        <position position="51"/>
    </location>
    <ligand>
        <name>[2Fe-2S] cluster</name>
        <dbReference type="ChEBI" id="CHEBI:190135"/>
        <label>1</label>
    </ligand>
</feature>
<feature type="binding site" evidence="2">
    <location>
        <position position="73"/>
    </location>
    <ligand>
        <name>[2Fe-2S] cluster</name>
        <dbReference type="ChEBI" id="CHEBI:190135"/>
        <label>1</label>
    </ligand>
</feature>
<feature type="binding site" evidence="2">
    <location>
        <position position="113"/>
    </location>
    <ligand>
        <name>[2Fe-2S] cluster</name>
        <dbReference type="ChEBI" id="CHEBI:190135"/>
        <label>2</label>
    </ligand>
</feature>
<feature type="binding site" evidence="2">
    <location>
        <position position="116"/>
    </location>
    <ligand>
        <name>[2Fe-2S] cluster</name>
        <dbReference type="ChEBI" id="CHEBI:190135"/>
        <label>2</label>
    </ligand>
</feature>
<feature type="binding site" evidence="2">
    <location>
        <position position="148"/>
    </location>
    <ligand>
        <name>[2Fe-2S] cluster</name>
        <dbReference type="ChEBI" id="CHEBI:190135"/>
        <label>2</label>
    </ligand>
</feature>
<feature type="binding site" evidence="2">
    <location>
        <position position="150"/>
    </location>
    <ligand>
        <name>[2Fe-2S] cluster</name>
        <dbReference type="ChEBI" id="CHEBI:190135"/>
        <label>2</label>
    </ligand>
</feature>
<feature type="binding site" evidence="1">
    <location>
        <begin position="257"/>
        <end position="264"/>
    </location>
    <ligand>
        <name>FAD</name>
        <dbReference type="ChEBI" id="CHEBI:57692"/>
    </ligand>
</feature>
<feature type="binding site" evidence="1">
    <location>
        <position position="335"/>
    </location>
    <ligand>
        <name>FAD</name>
        <dbReference type="ChEBI" id="CHEBI:57692"/>
    </ligand>
</feature>
<feature type="binding site" evidence="1">
    <location>
        <begin position="345"/>
        <end position="349"/>
    </location>
    <ligand>
        <name>FAD</name>
        <dbReference type="ChEBI" id="CHEBI:57692"/>
    </ligand>
</feature>
<feature type="binding site" evidence="1">
    <location>
        <position position="358"/>
    </location>
    <ligand>
        <name>FAD</name>
        <dbReference type="ChEBI" id="CHEBI:57692"/>
    </ligand>
</feature>
<feature type="binding site" evidence="1">
    <location>
        <position position="402"/>
    </location>
    <ligand>
        <name>FAD</name>
        <dbReference type="ChEBI" id="CHEBI:57692"/>
    </ligand>
</feature>
<feature type="binding site" evidence="1">
    <location>
        <position position="420"/>
    </location>
    <ligand>
        <name>FAD</name>
        <dbReference type="ChEBI" id="CHEBI:57692"/>
    </ligand>
</feature>
<feature type="binding site" evidence="1">
    <location>
        <position position="766"/>
    </location>
    <ligand>
        <name>Mo-molybdopterin</name>
        <dbReference type="ChEBI" id="CHEBI:71302"/>
    </ligand>
    <ligandPart>
        <name>Mo</name>
        <dbReference type="ChEBI" id="CHEBI:28685"/>
    </ligandPart>
</feature>
<feature type="binding site" evidence="1">
    <location>
        <position position="797"/>
    </location>
    <ligand>
        <name>Mo-molybdopterin</name>
        <dbReference type="ChEBI" id="CHEBI:71302"/>
    </ligand>
    <ligandPart>
        <name>Mo</name>
        <dbReference type="ChEBI" id="CHEBI:28685"/>
    </ligandPart>
</feature>
<feature type="binding site" evidence="1">
    <location>
        <position position="801"/>
    </location>
    <ligand>
        <name>substrate</name>
    </ligand>
</feature>
<feature type="binding site" evidence="1">
    <location>
        <position position="879"/>
    </location>
    <ligand>
        <name>substrate</name>
    </ligand>
</feature>
<feature type="binding site" evidence="1">
    <location>
        <position position="911"/>
    </location>
    <ligand>
        <name>Mo-molybdopterin</name>
        <dbReference type="ChEBI" id="CHEBI:71302"/>
    </ligand>
    <ligandPart>
        <name>Mo</name>
        <dbReference type="ChEBI" id="CHEBI:28685"/>
    </ligandPart>
</feature>
<feature type="binding site" evidence="1">
    <location>
        <position position="913"/>
    </location>
    <ligand>
        <name>substrate</name>
    </ligand>
</feature>
<feature type="binding site" evidence="1">
    <location>
        <position position="1009"/>
    </location>
    <ligand>
        <name>substrate</name>
    </ligand>
</feature>
<feature type="binding site" evidence="1">
    <location>
        <position position="1078"/>
    </location>
    <ligand>
        <name>Mo-molybdopterin</name>
        <dbReference type="ChEBI" id="CHEBI:71302"/>
    </ligand>
    <ligandPart>
        <name>Mo</name>
        <dbReference type="ChEBI" id="CHEBI:28685"/>
    </ligandPart>
</feature>
<feature type="disulfide bond" description="In oxidase form" evidence="1">
    <location>
        <begin position="534"/>
        <end position="991"/>
    </location>
</feature>
<dbReference type="EC" id="1.17.1.4" evidence="2"/>
<dbReference type="EC" id="1.17.3.2" evidence="2"/>
<dbReference type="EMBL" id="AF286379">
    <property type="protein sequence ID" value="AAF97949.1"/>
    <property type="molecule type" value="mRNA"/>
</dbReference>
<dbReference type="RefSeq" id="NP_001009217.1">
    <property type="nucleotide sequence ID" value="NM_001009217.1"/>
</dbReference>
<dbReference type="SMR" id="Q9MYW6"/>
<dbReference type="STRING" id="9685.ENSFCAP00000033363"/>
<dbReference type="PaxDb" id="9685-ENSFCAP00000004209"/>
<dbReference type="GeneID" id="493692"/>
<dbReference type="KEGG" id="fca:493692"/>
<dbReference type="CTD" id="7498"/>
<dbReference type="eggNOG" id="KOG0430">
    <property type="taxonomic scope" value="Eukaryota"/>
</dbReference>
<dbReference type="InParanoid" id="Q9MYW6"/>
<dbReference type="OrthoDB" id="8300278at2759"/>
<dbReference type="Proteomes" id="UP000011712">
    <property type="component" value="Unplaced"/>
</dbReference>
<dbReference type="GO" id="GO:0005615">
    <property type="term" value="C:extracellular space"/>
    <property type="evidence" value="ECO:0000318"/>
    <property type="project" value="GO_Central"/>
</dbReference>
<dbReference type="GO" id="GO:0005777">
    <property type="term" value="C:peroxisome"/>
    <property type="evidence" value="ECO:0007669"/>
    <property type="project" value="UniProtKB-SubCell"/>
</dbReference>
<dbReference type="GO" id="GO:0051537">
    <property type="term" value="F:2 iron, 2 sulfur cluster binding"/>
    <property type="evidence" value="ECO:0000250"/>
    <property type="project" value="UniProtKB"/>
</dbReference>
<dbReference type="GO" id="GO:0071949">
    <property type="term" value="F:FAD binding"/>
    <property type="evidence" value="ECO:0007669"/>
    <property type="project" value="InterPro"/>
</dbReference>
<dbReference type="GO" id="GO:0050660">
    <property type="term" value="F:flavin adenine dinucleotide binding"/>
    <property type="evidence" value="ECO:0000250"/>
    <property type="project" value="UniProtKB"/>
</dbReference>
<dbReference type="GO" id="GO:0005506">
    <property type="term" value="F:iron ion binding"/>
    <property type="evidence" value="ECO:0007669"/>
    <property type="project" value="InterPro"/>
</dbReference>
<dbReference type="GO" id="GO:0043546">
    <property type="term" value="F:molybdopterin cofactor binding"/>
    <property type="evidence" value="ECO:0000250"/>
    <property type="project" value="UniProtKB"/>
</dbReference>
<dbReference type="GO" id="GO:0004854">
    <property type="term" value="F:xanthine dehydrogenase activity"/>
    <property type="evidence" value="ECO:0000250"/>
    <property type="project" value="UniProtKB"/>
</dbReference>
<dbReference type="GO" id="GO:0004855">
    <property type="term" value="F:xanthine oxidase activity"/>
    <property type="evidence" value="ECO:0000250"/>
    <property type="project" value="UniProtKB"/>
</dbReference>
<dbReference type="GO" id="GO:0009115">
    <property type="term" value="P:xanthine catabolic process"/>
    <property type="evidence" value="ECO:0000250"/>
    <property type="project" value="UniProtKB"/>
</dbReference>
<dbReference type="FunFam" id="3.10.20.30:FF:000015">
    <property type="entry name" value="Aldehyde oxidase 1"/>
    <property type="match status" value="1"/>
</dbReference>
<dbReference type="FunFam" id="3.30.365.10:FF:000003">
    <property type="entry name" value="Aldehyde oxidase 1"/>
    <property type="match status" value="1"/>
</dbReference>
<dbReference type="FunFam" id="3.30.365.10:FF:000001">
    <property type="entry name" value="Xanthine dehydrogenase oxidase"/>
    <property type="match status" value="1"/>
</dbReference>
<dbReference type="FunFam" id="3.30.365.10:FF:000002">
    <property type="entry name" value="Xanthine dehydrogenase oxidase"/>
    <property type="match status" value="1"/>
</dbReference>
<dbReference type="FunFam" id="3.30.365.10:FF:000004">
    <property type="entry name" value="Xanthine dehydrogenase oxidase"/>
    <property type="match status" value="1"/>
</dbReference>
<dbReference type="FunFam" id="3.30.390.50:FF:000001">
    <property type="entry name" value="Xanthine dehydrogenase oxidase"/>
    <property type="match status" value="1"/>
</dbReference>
<dbReference type="FunFam" id="3.30.43.10:FF:000001">
    <property type="entry name" value="Xanthine dehydrogenase/oxidase"/>
    <property type="match status" value="1"/>
</dbReference>
<dbReference type="FunFam" id="3.30.465.10:FF:000004">
    <property type="entry name" value="Xanthine dehydrogenase/oxidase"/>
    <property type="match status" value="1"/>
</dbReference>
<dbReference type="FunFam" id="3.90.1170.50:FF:000002">
    <property type="entry name" value="Xanthine dehydrogenase/oxidase"/>
    <property type="match status" value="1"/>
</dbReference>
<dbReference type="FunFam" id="1.10.150.120:FF:000002">
    <property type="entry name" value="xanthine dehydrogenase/oxidase"/>
    <property type="match status" value="1"/>
</dbReference>
<dbReference type="FunFam" id="3.30.365.10:FF:000006">
    <property type="entry name" value="xanthine dehydrogenase/oxidase"/>
    <property type="match status" value="1"/>
</dbReference>
<dbReference type="Gene3D" id="3.10.20.30">
    <property type="match status" value="1"/>
</dbReference>
<dbReference type="Gene3D" id="3.30.465.10">
    <property type="match status" value="1"/>
</dbReference>
<dbReference type="Gene3D" id="1.10.150.120">
    <property type="entry name" value="[2Fe-2S]-binding domain"/>
    <property type="match status" value="1"/>
</dbReference>
<dbReference type="Gene3D" id="3.90.1170.50">
    <property type="entry name" value="Aldehyde oxidase/xanthine dehydrogenase, a/b hammerhead"/>
    <property type="match status" value="1"/>
</dbReference>
<dbReference type="Gene3D" id="3.30.365.10">
    <property type="entry name" value="Aldehyde oxidase/xanthine dehydrogenase, molybdopterin binding domain"/>
    <property type="match status" value="5"/>
</dbReference>
<dbReference type="Gene3D" id="3.30.390.50">
    <property type="entry name" value="CO dehydrogenase flavoprotein, C-terminal domain"/>
    <property type="match status" value="1"/>
</dbReference>
<dbReference type="Gene3D" id="3.30.43.10">
    <property type="entry name" value="Uridine Diphospho-n-acetylenolpyruvylglucosamine Reductase, domain 2"/>
    <property type="match status" value="1"/>
</dbReference>
<dbReference type="InterPro" id="IPR002888">
    <property type="entry name" value="2Fe-2S-bd"/>
</dbReference>
<dbReference type="InterPro" id="IPR036884">
    <property type="entry name" value="2Fe-2S-bd_dom_sf"/>
</dbReference>
<dbReference type="InterPro" id="IPR036010">
    <property type="entry name" value="2Fe-2S_ferredoxin-like_sf"/>
</dbReference>
<dbReference type="InterPro" id="IPR001041">
    <property type="entry name" value="2Fe-2S_ferredoxin-type"/>
</dbReference>
<dbReference type="InterPro" id="IPR006058">
    <property type="entry name" value="2Fe2S_fd_BS"/>
</dbReference>
<dbReference type="InterPro" id="IPR000674">
    <property type="entry name" value="Ald_Oxase/Xan_DH_a/b"/>
</dbReference>
<dbReference type="InterPro" id="IPR036856">
    <property type="entry name" value="Ald_Oxase/Xan_DH_a/b_sf"/>
</dbReference>
<dbReference type="InterPro" id="IPR016208">
    <property type="entry name" value="Ald_Oxase/xanthine_DH-like"/>
</dbReference>
<dbReference type="InterPro" id="IPR008274">
    <property type="entry name" value="AldOxase/xan_DH_MoCoBD1"/>
</dbReference>
<dbReference type="InterPro" id="IPR046867">
    <property type="entry name" value="AldOxase/xan_DH_MoCoBD2"/>
</dbReference>
<dbReference type="InterPro" id="IPR037165">
    <property type="entry name" value="AldOxase/xan_DH_Mopterin-bd_sf"/>
</dbReference>
<dbReference type="InterPro" id="IPR012675">
    <property type="entry name" value="Beta-grasp_dom_sf"/>
</dbReference>
<dbReference type="InterPro" id="IPR005107">
    <property type="entry name" value="CO_DH_flav_C"/>
</dbReference>
<dbReference type="InterPro" id="IPR036683">
    <property type="entry name" value="CO_DH_flav_C_dom_sf"/>
</dbReference>
<dbReference type="InterPro" id="IPR016166">
    <property type="entry name" value="FAD-bd_PCMH"/>
</dbReference>
<dbReference type="InterPro" id="IPR036318">
    <property type="entry name" value="FAD-bd_PCMH-like_sf"/>
</dbReference>
<dbReference type="InterPro" id="IPR016167">
    <property type="entry name" value="FAD-bd_PCMH_sub1"/>
</dbReference>
<dbReference type="InterPro" id="IPR016169">
    <property type="entry name" value="FAD-bd_PCMH_sub2"/>
</dbReference>
<dbReference type="InterPro" id="IPR002346">
    <property type="entry name" value="Mopterin_DH_FAD-bd"/>
</dbReference>
<dbReference type="InterPro" id="IPR022407">
    <property type="entry name" value="OxRdtase_Mopterin_BS"/>
</dbReference>
<dbReference type="InterPro" id="IPR014307">
    <property type="entry name" value="Xanthine_DH_ssu"/>
</dbReference>
<dbReference type="NCBIfam" id="TIGR02963">
    <property type="entry name" value="xanthine_xdhA"/>
    <property type="match status" value="1"/>
</dbReference>
<dbReference type="PANTHER" id="PTHR45444">
    <property type="entry name" value="XANTHINE DEHYDROGENASE"/>
    <property type="match status" value="1"/>
</dbReference>
<dbReference type="PANTHER" id="PTHR45444:SF3">
    <property type="entry name" value="XANTHINE DEHYDROGENASE"/>
    <property type="match status" value="1"/>
</dbReference>
<dbReference type="Pfam" id="PF01315">
    <property type="entry name" value="Ald_Xan_dh_C"/>
    <property type="match status" value="1"/>
</dbReference>
<dbReference type="Pfam" id="PF03450">
    <property type="entry name" value="CO_deh_flav_C"/>
    <property type="match status" value="1"/>
</dbReference>
<dbReference type="Pfam" id="PF00941">
    <property type="entry name" value="FAD_binding_5"/>
    <property type="match status" value="1"/>
</dbReference>
<dbReference type="Pfam" id="PF00111">
    <property type="entry name" value="Fer2"/>
    <property type="match status" value="1"/>
</dbReference>
<dbReference type="Pfam" id="PF01799">
    <property type="entry name" value="Fer2_2"/>
    <property type="match status" value="1"/>
</dbReference>
<dbReference type="Pfam" id="PF02738">
    <property type="entry name" value="MoCoBD_1"/>
    <property type="match status" value="1"/>
</dbReference>
<dbReference type="Pfam" id="PF20256">
    <property type="entry name" value="MoCoBD_2"/>
    <property type="match status" value="1"/>
</dbReference>
<dbReference type="PIRSF" id="PIRSF000127">
    <property type="entry name" value="Xanthine_DH"/>
    <property type="match status" value="1"/>
</dbReference>
<dbReference type="SMART" id="SM01008">
    <property type="entry name" value="Ald_Xan_dh_C"/>
    <property type="match status" value="1"/>
</dbReference>
<dbReference type="SMART" id="SM01092">
    <property type="entry name" value="CO_deh_flav_C"/>
    <property type="match status" value="1"/>
</dbReference>
<dbReference type="SUPFAM" id="SSF54292">
    <property type="entry name" value="2Fe-2S ferredoxin-like"/>
    <property type="match status" value="1"/>
</dbReference>
<dbReference type="SUPFAM" id="SSF55447">
    <property type="entry name" value="CO dehydrogenase flavoprotein C-terminal domain-like"/>
    <property type="match status" value="1"/>
</dbReference>
<dbReference type="SUPFAM" id="SSF47741">
    <property type="entry name" value="CO dehydrogenase ISP C-domain like"/>
    <property type="match status" value="1"/>
</dbReference>
<dbReference type="SUPFAM" id="SSF54665">
    <property type="entry name" value="CO dehydrogenase molybdoprotein N-domain-like"/>
    <property type="match status" value="1"/>
</dbReference>
<dbReference type="SUPFAM" id="SSF56176">
    <property type="entry name" value="FAD-binding/transporter-associated domain-like"/>
    <property type="match status" value="1"/>
</dbReference>
<dbReference type="SUPFAM" id="SSF56003">
    <property type="entry name" value="Molybdenum cofactor-binding domain"/>
    <property type="match status" value="1"/>
</dbReference>
<dbReference type="PROSITE" id="PS00197">
    <property type="entry name" value="2FE2S_FER_1"/>
    <property type="match status" value="1"/>
</dbReference>
<dbReference type="PROSITE" id="PS51085">
    <property type="entry name" value="2FE2S_FER_2"/>
    <property type="match status" value="1"/>
</dbReference>
<dbReference type="PROSITE" id="PS51387">
    <property type="entry name" value="FAD_PCMH"/>
    <property type="match status" value="1"/>
</dbReference>
<dbReference type="PROSITE" id="PS00559">
    <property type="entry name" value="MOLYBDOPTERIN_EUK"/>
    <property type="match status" value="1"/>
</dbReference>
<comment type="function">
    <text evidence="2">Key enzyme in purine degradation. Catalyzes the oxidation of hypoxanthine to xanthine. Catalyzes the oxidation of xanthine to uric acid. Contributes to the generation of reactive oxygen species.</text>
</comment>
<comment type="catalytic activity">
    <reaction evidence="2">
        <text>xanthine + NAD(+) + H2O = urate + NADH + H(+)</text>
        <dbReference type="Rhea" id="RHEA:16669"/>
        <dbReference type="ChEBI" id="CHEBI:15377"/>
        <dbReference type="ChEBI" id="CHEBI:15378"/>
        <dbReference type="ChEBI" id="CHEBI:17712"/>
        <dbReference type="ChEBI" id="CHEBI:17775"/>
        <dbReference type="ChEBI" id="CHEBI:57540"/>
        <dbReference type="ChEBI" id="CHEBI:57945"/>
        <dbReference type="EC" id="1.17.1.4"/>
    </reaction>
</comment>
<comment type="catalytic activity">
    <reaction evidence="2">
        <text>hypoxanthine + NAD(+) + H2O = xanthine + NADH + H(+)</text>
        <dbReference type="Rhea" id="RHEA:24670"/>
        <dbReference type="ChEBI" id="CHEBI:15377"/>
        <dbReference type="ChEBI" id="CHEBI:15378"/>
        <dbReference type="ChEBI" id="CHEBI:17368"/>
        <dbReference type="ChEBI" id="CHEBI:17712"/>
        <dbReference type="ChEBI" id="CHEBI:57540"/>
        <dbReference type="ChEBI" id="CHEBI:57945"/>
        <dbReference type="EC" id="1.17.1.4"/>
    </reaction>
</comment>
<comment type="catalytic activity">
    <reaction evidence="2">
        <text>xanthine + O2 + H2O = urate + H2O2</text>
        <dbReference type="Rhea" id="RHEA:21132"/>
        <dbReference type="ChEBI" id="CHEBI:15377"/>
        <dbReference type="ChEBI" id="CHEBI:15379"/>
        <dbReference type="ChEBI" id="CHEBI:16240"/>
        <dbReference type="ChEBI" id="CHEBI:17712"/>
        <dbReference type="ChEBI" id="CHEBI:17775"/>
        <dbReference type="EC" id="1.17.3.2"/>
    </reaction>
</comment>
<comment type="cofactor">
    <cofactor evidence="1">
        <name>FAD</name>
        <dbReference type="ChEBI" id="CHEBI:57692"/>
    </cofactor>
</comment>
<comment type="cofactor">
    <cofactor evidence="1">
        <name>Mo-molybdopterin</name>
        <dbReference type="ChEBI" id="CHEBI:71302"/>
    </cofactor>
    <text evidence="1">Binds 1 Mo-molybdopterin (Mo-MPT) cofactor per subunit.</text>
</comment>
<comment type="cofactor">
    <cofactor evidence="2">
        <name>[2Fe-2S] cluster</name>
        <dbReference type="ChEBI" id="CHEBI:190135"/>
    </cofactor>
    <text evidence="2">Binds 2 [2Fe-2S] clusters per subunit.</text>
</comment>
<comment type="activity regulation">
    <text evidence="1">Can be converted from the dehydrogenase form (D) to the oxidase form (O) irreversibly by proteolysis or reversibly through the oxidation of sulfhydryl groups.</text>
</comment>
<comment type="subunit">
    <text evidence="1">Homodimer. Interacts with BTN1A1 (By similarity).</text>
</comment>
<comment type="subcellular location">
    <subcellularLocation>
        <location evidence="1">Cytoplasm</location>
    </subcellularLocation>
    <subcellularLocation>
        <location evidence="1">Peroxisome</location>
    </subcellularLocation>
    <subcellularLocation>
        <location evidence="1">Secreted</location>
    </subcellularLocation>
</comment>
<comment type="PTM">
    <text evidence="1">Subject to partial proteolysis; this alters the enzyme from the dehydrogenase form (D) to the oxidase form (O).</text>
</comment>
<comment type="PTM">
    <text evidence="1">Contains sulfhydryl groups that are easily oxidized (in vitro); this alters the enzyme from the dehydrogenase form (D) to the oxidase form (O).</text>
</comment>
<comment type="similarity">
    <text evidence="5">Belongs to the xanthine dehydrogenase family.</text>
</comment>
<reference key="1">
    <citation type="journal article" date="2001" name="J. Vet. Med. Sci.">
        <title>Molecular cloning of a cDNA coding for feline liver xanthine dehydrogenase.</title>
        <authorList>
            <person name="Tsuchida S."/>
            <person name="Yamada R."/>
            <person name="Ikemoto S."/>
            <person name="Tagawa M."/>
        </authorList>
    </citation>
    <scope>NUCLEOTIDE SEQUENCE [MRNA]</scope>
    <source>
        <tissue>Liver</tissue>
    </source>
</reference>
<name>XDH_FELCA</name>